<comment type="function">
    <text>May play a role in a redox process involved in nitrogen fixation.</text>
</comment>
<comment type="subunit">
    <text evidence="2">FixA and FixB form a heterodimer.</text>
</comment>
<comment type="similarity">
    <text evidence="2">Belongs to the ETF alpha-subunit/FixB family.</text>
</comment>
<gene>
    <name type="primary">fixB</name>
    <name type="ordered locus">blr1773</name>
</gene>
<dbReference type="EMBL" id="U32227">
    <property type="protein sequence ID" value="AAB00903.1"/>
    <property type="molecule type" value="Genomic_DNA"/>
</dbReference>
<dbReference type="EMBL" id="AH010242">
    <property type="protein sequence ID" value="AAG60757.1"/>
    <property type="molecule type" value="Genomic_DNA"/>
</dbReference>
<dbReference type="EMBL" id="BA000040">
    <property type="protein sequence ID" value="BAC47038.1"/>
    <property type="molecule type" value="Genomic_DNA"/>
</dbReference>
<dbReference type="EMBL" id="X13143">
    <property type="protein sequence ID" value="CAA31538.1"/>
    <property type="molecule type" value="Genomic_DNA"/>
</dbReference>
<dbReference type="PIR" id="S04183">
    <property type="entry name" value="S04183"/>
</dbReference>
<dbReference type="RefSeq" id="NP_768413.1">
    <property type="nucleotide sequence ID" value="NC_004463.1"/>
</dbReference>
<dbReference type="RefSeq" id="WP_011084582.1">
    <property type="nucleotide sequence ID" value="NC_004463.1"/>
</dbReference>
<dbReference type="SMR" id="P10449"/>
<dbReference type="FunCoup" id="P10449">
    <property type="interactions" value="594"/>
</dbReference>
<dbReference type="STRING" id="224911.AAV28_05790"/>
<dbReference type="EnsemblBacteria" id="BAC47038">
    <property type="protein sequence ID" value="BAC47038"/>
    <property type="gene ID" value="BAC47038"/>
</dbReference>
<dbReference type="GeneID" id="46488978"/>
<dbReference type="KEGG" id="bja:blr1773"/>
<dbReference type="PATRIC" id="fig|224911.44.peg.1241"/>
<dbReference type="eggNOG" id="COG2025">
    <property type="taxonomic scope" value="Bacteria"/>
</dbReference>
<dbReference type="HOGENOM" id="CLU_034178_1_1_5"/>
<dbReference type="InParanoid" id="P10449"/>
<dbReference type="OrthoDB" id="9770286at2"/>
<dbReference type="PhylomeDB" id="P10449"/>
<dbReference type="Proteomes" id="UP000002526">
    <property type="component" value="Chromosome"/>
</dbReference>
<dbReference type="GO" id="GO:0009055">
    <property type="term" value="F:electron transfer activity"/>
    <property type="evidence" value="ECO:0000318"/>
    <property type="project" value="GO_Central"/>
</dbReference>
<dbReference type="GO" id="GO:0050660">
    <property type="term" value="F:flavin adenine dinucleotide binding"/>
    <property type="evidence" value="ECO:0000318"/>
    <property type="project" value="GO_Central"/>
</dbReference>
<dbReference type="GO" id="GO:0033539">
    <property type="term" value="P:fatty acid beta-oxidation using acyl-CoA dehydrogenase"/>
    <property type="evidence" value="ECO:0000318"/>
    <property type="project" value="GO_Central"/>
</dbReference>
<dbReference type="GO" id="GO:0009399">
    <property type="term" value="P:nitrogen fixation"/>
    <property type="evidence" value="ECO:0007669"/>
    <property type="project" value="UniProtKB-KW"/>
</dbReference>
<dbReference type="CDD" id="cd01715">
    <property type="entry name" value="ETF_alpha"/>
    <property type="match status" value="1"/>
</dbReference>
<dbReference type="Gene3D" id="3.40.50.620">
    <property type="entry name" value="HUPs"/>
    <property type="match status" value="1"/>
</dbReference>
<dbReference type="Gene3D" id="3.40.50.1220">
    <property type="entry name" value="TPP-binding domain"/>
    <property type="match status" value="1"/>
</dbReference>
<dbReference type="InterPro" id="IPR029035">
    <property type="entry name" value="DHS-like_NAD/FAD-binding_dom"/>
</dbReference>
<dbReference type="InterPro" id="IPR014730">
    <property type="entry name" value="ETF_a/b_N"/>
</dbReference>
<dbReference type="InterPro" id="IPR001308">
    <property type="entry name" value="ETF_a/FixB"/>
</dbReference>
<dbReference type="InterPro" id="IPR033947">
    <property type="entry name" value="ETF_alpha_N"/>
</dbReference>
<dbReference type="InterPro" id="IPR014731">
    <property type="entry name" value="ETF_asu_C"/>
</dbReference>
<dbReference type="InterPro" id="IPR018206">
    <property type="entry name" value="ETF_asu_C_CS"/>
</dbReference>
<dbReference type="InterPro" id="IPR014729">
    <property type="entry name" value="Rossmann-like_a/b/a_fold"/>
</dbReference>
<dbReference type="PANTHER" id="PTHR43153">
    <property type="entry name" value="ELECTRON TRANSFER FLAVOPROTEIN ALPHA"/>
    <property type="match status" value="1"/>
</dbReference>
<dbReference type="PANTHER" id="PTHR43153:SF1">
    <property type="entry name" value="ELECTRON TRANSFER FLAVOPROTEIN SUBUNIT ALPHA, MITOCHONDRIAL"/>
    <property type="match status" value="1"/>
</dbReference>
<dbReference type="Pfam" id="PF01012">
    <property type="entry name" value="ETF"/>
    <property type="match status" value="1"/>
</dbReference>
<dbReference type="Pfam" id="PF00766">
    <property type="entry name" value="ETF_alpha"/>
    <property type="match status" value="1"/>
</dbReference>
<dbReference type="PIRSF" id="PIRSF000089">
    <property type="entry name" value="Electra_flavoP_a"/>
    <property type="match status" value="1"/>
</dbReference>
<dbReference type="SMART" id="SM00893">
    <property type="entry name" value="ETF"/>
    <property type="match status" value="1"/>
</dbReference>
<dbReference type="SUPFAM" id="SSF52402">
    <property type="entry name" value="Adenine nucleotide alpha hydrolases-like"/>
    <property type="match status" value="1"/>
</dbReference>
<dbReference type="SUPFAM" id="SSF52467">
    <property type="entry name" value="DHS-like NAD/FAD-binding domain"/>
    <property type="match status" value="1"/>
</dbReference>
<dbReference type="PROSITE" id="PS00696">
    <property type="entry name" value="ETF_ALPHA"/>
    <property type="match status" value="1"/>
</dbReference>
<organism>
    <name type="scientific">Bradyrhizobium diazoefficiens (strain JCM 10833 / BCRC 13528 / IAM 13628 / NBRC 14792 / USDA 110)</name>
    <dbReference type="NCBI Taxonomy" id="224911"/>
    <lineage>
        <taxon>Bacteria</taxon>
        <taxon>Pseudomonadati</taxon>
        <taxon>Pseudomonadota</taxon>
        <taxon>Alphaproteobacteria</taxon>
        <taxon>Hyphomicrobiales</taxon>
        <taxon>Nitrobacteraceae</taxon>
        <taxon>Bradyrhizobium</taxon>
    </lineage>
</organism>
<sequence>MSKVSKTAMPAGAGRGAAKKELPEHFKSYKHVWVFVELERGQVHPVSWELMGTGRGLADRLKVNLAAVVVGPEGQHTRNAALEAFCYGADLAYLVSDNVLSDYRNESYTKALTELVNTYKPEILLLGATTLGRDLAGSVATNLSTGLTADCTTLDVDADGSLAATRPTFGGSLLCTIYTLNYRPQMATVRPRVMPMPARVMRDAARIVVHPLGLVEDDIVTKVLSFLPDRDAETSTLAYADVVVAGGLGLGSPENFRLVRELAALLGAEYGCSRPLVQKGWVTSDRQIGQTGKTIRPKLYIAAGISGAIQHRVGVEGADLIVAVNTDKNAPIFDFAHLAIVSDAMQLLPALTAAFRARLLPDSRARIAV</sequence>
<feature type="chain" id="PRO_0000167857" description="Protein FixB">
    <location>
        <begin position="1"/>
        <end position="369"/>
    </location>
</feature>
<feature type="binding site" evidence="1">
    <location>
        <begin position="299"/>
        <end position="327"/>
    </location>
    <ligand>
        <name>FAD</name>
        <dbReference type="ChEBI" id="CHEBI:57692"/>
    </ligand>
</feature>
<proteinExistence type="inferred from homology"/>
<name>FIXB_BRADU</name>
<accession>P10449</accession>
<reference key="1">
    <citation type="journal article" date="1996" name="Arch. Microbiol.">
        <title>Bradyrhizobium japonicum possesses two discrete sets of electron transfer flavoprotein genes: fixA, fixB and etfS, etfL.</title>
        <authorList>
            <person name="Weidenhaupt M."/>
            <person name="Rossi P."/>
            <person name="Beck C."/>
            <person name="Fischer H.-M."/>
            <person name="Hennecke H."/>
        </authorList>
    </citation>
    <scope>NUCLEOTIDE SEQUENCE [GENOMIC DNA]</scope>
    <source>
        <strain>USDA 3I1b110</strain>
    </source>
</reference>
<reference key="2">
    <citation type="journal article" date="2001" name="J. Bacteriol.">
        <title>Potential symbiosis-specific genes uncovered by sequencing a 410-kb DNA region of the Bradyrhizobium japonicum chromosome.</title>
        <authorList>
            <person name="Goettfert M."/>
            <person name="Roethlisberger S."/>
            <person name="Kuendig C."/>
            <person name="Beck C."/>
            <person name="Marty R."/>
            <person name="Hennecke H."/>
        </authorList>
    </citation>
    <scope>NUCLEOTIDE SEQUENCE [GENOMIC DNA]</scope>
    <source>
        <strain>USDA 110spc4</strain>
    </source>
</reference>
<reference key="3">
    <citation type="journal article" date="2002" name="DNA Res.">
        <title>Complete genomic sequence of nitrogen-fixing symbiotic bacterium Bradyrhizobium japonicum USDA110.</title>
        <authorList>
            <person name="Kaneko T."/>
            <person name="Nakamura Y."/>
            <person name="Sato S."/>
            <person name="Minamisawa K."/>
            <person name="Uchiumi T."/>
            <person name="Sasamoto S."/>
            <person name="Watanabe A."/>
            <person name="Idesawa K."/>
            <person name="Iriguchi M."/>
            <person name="Kawashima K."/>
            <person name="Kohara M."/>
            <person name="Matsumoto M."/>
            <person name="Shimpo S."/>
            <person name="Tsuruoka H."/>
            <person name="Wada T."/>
            <person name="Yamada M."/>
            <person name="Tabata S."/>
        </authorList>
    </citation>
    <scope>NUCLEOTIDE SEQUENCE [LARGE SCALE GENOMIC DNA]</scope>
    <source>
        <strain>JCM 10833 / BCRC 13528 / IAM 13628 / NBRC 14792 / USDA 110</strain>
    </source>
</reference>
<reference key="4">
    <citation type="journal article" date="1989" name="Mol. Microbiol.">
        <title>The Bradyrhizobium japonicum fixBCX operon: identification of fixX and of a 5' mRNA region affecting the level of the fixBCX transcript.</title>
        <authorList>
            <person name="Gubler M."/>
            <person name="Zurcher T."/>
            <person name="Hennecke H."/>
        </authorList>
    </citation>
    <scope>NUCLEOTIDE SEQUENCE [GENOMIC DNA] OF 1-45</scope>
    <source>
        <strain>USDA 110spc4</strain>
    </source>
</reference>
<keyword id="KW-0249">Electron transport</keyword>
<keyword id="KW-0274">FAD</keyword>
<keyword id="KW-0285">Flavoprotein</keyword>
<keyword id="KW-0535">Nitrogen fixation</keyword>
<keyword id="KW-1185">Reference proteome</keyword>
<keyword id="KW-0813">Transport</keyword>
<evidence type="ECO:0000255" key="1"/>
<evidence type="ECO:0000305" key="2"/>
<protein>
    <recommendedName>
        <fullName>Protein FixB</fullName>
    </recommendedName>
</protein>